<protein>
    <recommendedName>
        <fullName evidence="1">Ribulose bisphosphate carboxylase large chain</fullName>
        <shortName evidence="1">RuBisCO large subunit</shortName>
        <ecNumber evidence="1">4.1.1.39</ecNumber>
    </recommendedName>
</protein>
<dbReference type="EC" id="4.1.1.39" evidence="1"/>
<dbReference type="EMBL" id="X81093">
    <property type="protein sequence ID" value="CAA56999.1"/>
    <property type="molecule type" value="Genomic_DNA"/>
</dbReference>
<dbReference type="EMBL" id="X83626">
    <property type="protein sequence ID" value="CAA58605.1"/>
    <property type="molecule type" value="Genomic_DNA"/>
</dbReference>
<dbReference type="SMR" id="Q31886"/>
<dbReference type="GO" id="GO:0009507">
    <property type="term" value="C:chloroplast"/>
    <property type="evidence" value="ECO:0007669"/>
    <property type="project" value="UniProtKB-SubCell"/>
</dbReference>
<dbReference type="GO" id="GO:0000287">
    <property type="term" value="F:magnesium ion binding"/>
    <property type="evidence" value="ECO:0007669"/>
    <property type="project" value="UniProtKB-UniRule"/>
</dbReference>
<dbReference type="GO" id="GO:0004497">
    <property type="term" value="F:monooxygenase activity"/>
    <property type="evidence" value="ECO:0007669"/>
    <property type="project" value="UniProtKB-KW"/>
</dbReference>
<dbReference type="GO" id="GO:0016984">
    <property type="term" value="F:ribulose-bisphosphate carboxylase activity"/>
    <property type="evidence" value="ECO:0007669"/>
    <property type="project" value="UniProtKB-UniRule"/>
</dbReference>
<dbReference type="GO" id="GO:0009853">
    <property type="term" value="P:photorespiration"/>
    <property type="evidence" value="ECO:0007669"/>
    <property type="project" value="UniProtKB-KW"/>
</dbReference>
<dbReference type="GO" id="GO:0019253">
    <property type="term" value="P:reductive pentose-phosphate cycle"/>
    <property type="evidence" value="ECO:0007669"/>
    <property type="project" value="UniProtKB-UniRule"/>
</dbReference>
<dbReference type="CDD" id="cd08212">
    <property type="entry name" value="RuBisCO_large_I"/>
    <property type="match status" value="1"/>
</dbReference>
<dbReference type="FunFam" id="3.20.20.110:FF:000001">
    <property type="entry name" value="Ribulose bisphosphate carboxylase large chain"/>
    <property type="match status" value="1"/>
</dbReference>
<dbReference type="FunFam" id="3.30.70.150:FF:000001">
    <property type="entry name" value="Ribulose bisphosphate carboxylase large chain"/>
    <property type="match status" value="1"/>
</dbReference>
<dbReference type="Gene3D" id="3.20.20.110">
    <property type="entry name" value="Ribulose bisphosphate carboxylase, large subunit, C-terminal domain"/>
    <property type="match status" value="1"/>
</dbReference>
<dbReference type="Gene3D" id="3.30.70.150">
    <property type="entry name" value="RuBisCO large subunit, N-terminal domain"/>
    <property type="match status" value="1"/>
</dbReference>
<dbReference type="HAMAP" id="MF_01338">
    <property type="entry name" value="RuBisCO_L_type1"/>
    <property type="match status" value="1"/>
</dbReference>
<dbReference type="InterPro" id="IPR033966">
    <property type="entry name" value="RuBisCO"/>
</dbReference>
<dbReference type="InterPro" id="IPR020878">
    <property type="entry name" value="RuBisCo_large_chain_AS"/>
</dbReference>
<dbReference type="InterPro" id="IPR000685">
    <property type="entry name" value="RuBisCO_lsu_C"/>
</dbReference>
<dbReference type="InterPro" id="IPR036376">
    <property type="entry name" value="RuBisCO_lsu_C_sf"/>
</dbReference>
<dbReference type="InterPro" id="IPR017443">
    <property type="entry name" value="RuBisCO_lsu_fd_N"/>
</dbReference>
<dbReference type="InterPro" id="IPR036422">
    <property type="entry name" value="RuBisCO_lsu_N_sf"/>
</dbReference>
<dbReference type="InterPro" id="IPR020888">
    <property type="entry name" value="RuBisCO_lsuI"/>
</dbReference>
<dbReference type="NCBIfam" id="NF003252">
    <property type="entry name" value="PRK04208.1"/>
    <property type="match status" value="1"/>
</dbReference>
<dbReference type="PANTHER" id="PTHR42704">
    <property type="entry name" value="RIBULOSE BISPHOSPHATE CARBOXYLASE"/>
    <property type="match status" value="1"/>
</dbReference>
<dbReference type="PANTHER" id="PTHR42704:SF15">
    <property type="entry name" value="RIBULOSE BISPHOSPHATE CARBOXYLASE LARGE CHAIN"/>
    <property type="match status" value="1"/>
</dbReference>
<dbReference type="Pfam" id="PF00016">
    <property type="entry name" value="RuBisCO_large"/>
    <property type="match status" value="1"/>
</dbReference>
<dbReference type="Pfam" id="PF02788">
    <property type="entry name" value="RuBisCO_large_N"/>
    <property type="match status" value="1"/>
</dbReference>
<dbReference type="SFLD" id="SFLDG01052">
    <property type="entry name" value="RuBisCO"/>
    <property type="match status" value="1"/>
</dbReference>
<dbReference type="SFLD" id="SFLDS00014">
    <property type="entry name" value="RuBisCO"/>
    <property type="match status" value="1"/>
</dbReference>
<dbReference type="SFLD" id="SFLDG00301">
    <property type="entry name" value="RuBisCO-like_proteins"/>
    <property type="match status" value="1"/>
</dbReference>
<dbReference type="SUPFAM" id="SSF51649">
    <property type="entry name" value="RuBisCo, C-terminal domain"/>
    <property type="match status" value="1"/>
</dbReference>
<dbReference type="SUPFAM" id="SSF54966">
    <property type="entry name" value="RuBisCO, large subunit, small (N-terminal) domain"/>
    <property type="match status" value="1"/>
</dbReference>
<dbReference type="PROSITE" id="PS00157">
    <property type="entry name" value="RUBISCO_LARGE"/>
    <property type="match status" value="1"/>
</dbReference>
<geneLocation type="chloroplast"/>
<name>RBL_BOUTR</name>
<proteinExistence type="inferred from homology"/>
<gene>
    <name evidence="1" type="primary">rbcL</name>
</gene>
<sequence>MSPQTETKASVGFKAGVKEYKLTYYTPEYETKDTDILAAFRVTPQPGVPPEEAGAAVAAESSTGTWTTVWTDGLTSLDRYKGRCYHIEPVPGEEDQFIAYVAYPLDLFEEGSVTNMFTSIVGNVFGFKALRALRLEDLRIPIAYVKTFEGPPHGIQVERDKLNKYGRPLLGCTIKPKLGLSAKNYGRACYECLRGGLDFTKDDENVNSQPFMRWRDRFLFCAEAIYKAQAETGEIKGHYLNATAGNCEEMIKRAVFARELGVPIVMHDYLTGGFTANTSLSHYCRDNGLLLHIHRAMHAVIDRQKNHGMHFRVLAKALRMSGGDHIHSGTVVGKLEGERDITLGFVDLLRDDYIEKDRSRGIYFTQDWVSMPGVLPVRSGGIHVWHMPALTDIFGDDSVLQFGGGTLGHPWGNAPGAVANRVALEACVKARNEGRNLASEGNEIIREAAKWSPELAAACEVWKEIKFIFAAVDTL</sequence>
<reference key="1">
    <citation type="journal article" date="1995" name="J. Mol. Evol.">
        <title>Comparison of the evolution of ribulose-1, 5-biphosphate carboxylase (rbcL) and atpB-rbcL noncoding spacer sequences in a recent plant group, the tribe Rubieae (Rubiaceae).</title>
        <authorList>
            <person name="Manen J.F."/>
            <person name="Natali A."/>
        </authorList>
    </citation>
    <scope>NUCLEOTIDE SEQUENCE [GENOMIC DNA] OF 1-453</scope>
</reference>
<reference key="2">
    <citation type="journal article" date="1995" name="Ann. Mo. Bot. Gard.">
        <title>Subfamilial and tribal relationships in the Rubiaceae based on rbcL sequence data.</title>
        <authorList>
            <person name="Bremer B."/>
            <person name="Andreasen K."/>
            <person name="Olsson D."/>
        </authorList>
    </citation>
    <scope>NUCLEOTIDE SEQUENCE [GENOMIC DNA] OF 10-475</scope>
</reference>
<keyword id="KW-0007">Acetylation</keyword>
<keyword id="KW-0113">Calvin cycle</keyword>
<keyword id="KW-0120">Carbon dioxide fixation</keyword>
<keyword id="KW-0150">Chloroplast</keyword>
<keyword id="KW-1015">Disulfide bond</keyword>
<keyword id="KW-0456">Lyase</keyword>
<keyword id="KW-0460">Magnesium</keyword>
<keyword id="KW-0479">Metal-binding</keyword>
<keyword id="KW-0488">Methylation</keyword>
<keyword id="KW-0503">Monooxygenase</keyword>
<keyword id="KW-0560">Oxidoreductase</keyword>
<keyword id="KW-0601">Photorespiration</keyword>
<keyword id="KW-0602">Photosynthesis</keyword>
<keyword id="KW-0934">Plastid</keyword>
<organism>
    <name type="scientific">Bouvardia ternifolia</name>
    <name type="common">Firecrackerbush</name>
    <name type="synonym">Bouvardia glaberrima</name>
    <dbReference type="NCBI Taxonomy" id="29783"/>
    <lineage>
        <taxon>Eukaryota</taxon>
        <taxon>Viridiplantae</taxon>
        <taxon>Streptophyta</taxon>
        <taxon>Embryophyta</taxon>
        <taxon>Tracheophyta</taxon>
        <taxon>Spermatophyta</taxon>
        <taxon>Magnoliopsida</taxon>
        <taxon>eudicotyledons</taxon>
        <taxon>Gunneridae</taxon>
        <taxon>Pentapetalae</taxon>
        <taxon>asterids</taxon>
        <taxon>lamiids</taxon>
        <taxon>Gentianales</taxon>
        <taxon>Rubiaceae</taxon>
        <taxon>Rubioideae</taxon>
        <taxon>Spermacoceae</taxon>
        <taxon>Bouvardia</taxon>
    </lineage>
</organism>
<accession>Q31886</accession>
<accession>Q31717</accession>
<evidence type="ECO:0000255" key="1">
    <source>
        <dbReference type="HAMAP-Rule" id="MF_01338"/>
    </source>
</evidence>
<evidence type="ECO:0000305" key="2"/>
<feature type="propeptide" id="PRO_0000031141" evidence="1">
    <location>
        <begin position="1"/>
        <end position="2"/>
    </location>
</feature>
<feature type="chain" id="PRO_0000031142" description="Ribulose bisphosphate carboxylase large chain">
    <location>
        <begin position="3"/>
        <end position="475"/>
    </location>
</feature>
<feature type="active site" description="Proton acceptor" evidence="1">
    <location>
        <position position="175"/>
    </location>
</feature>
<feature type="active site" description="Proton acceptor" evidence="1">
    <location>
        <position position="294"/>
    </location>
</feature>
<feature type="binding site" description="in homodimeric partner" evidence="1">
    <location>
        <position position="123"/>
    </location>
    <ligand>
        <name>substrate</name>
    </ligand>
</feature>
<feature type="binding site" evidence="1">
    <location>
        <position position="173"/>
    </location>
    <ligand>
        <name>substrate</name>
    </ligand>
</feature>
<feature type="binding site" evidence="1">
    <location>
        <position position="177"/>
    </location>
    <ligand>
        <name>substrate</name>
    </ligand>
</feature>
<feature type="binding site" description="via carbamate group" evidence="1">
    <location>
        <position position="201"/>
    </location>
    <ligand>
        <name>Mg(2+)</name>
        <dbReference type="ChEBI" id="CHEBI:18420"/>
    </ligand>
</feature>
<feature type="binding site" evidence="1">
    <location>
        <position position="203"/>
    </location>
    <ligand>
        <name>Mg(2+)</name>
        <dbReference type="ChEBI" id="CHEBI:18420"/>
    </ligand>
</feature>
<feature type="binding site" evidence="1">
    <location>
        <position position="204"/>
    </location>
    <ligand>
        <name>Mg(2+)</name>
        <dbReference type="ChEBI" id="CHEBI:18420"/>
    </ligand>
</feature>
<feature type="binding site" evidence="1">
    <location>
        <position position="295"/>
    </location>
    <ligand>
        <name>substrate</name>
    </ligand>
</feature>
<feature type="binding site" evidence="1">
    <location>
        <position position="327"/>
    </location>
    <ligand>
        <name>substrate</name>
    </ligand>
</feature>
<feature type="binding site" evidence="1">
    <location>
        <position position="379"/>
    </location>
    <ligand>
        <name>substrate</name>
    </ligand>
</feature>
<feature type="site" description="Transition state stabilizer" evidence="1">
    <location>
        <position position="334"/>
    </location>
</feature>
<feature type="modified residue" description="N-acetylproline" evidence="1">
    <location>
        <position position="3"/>
    </location>
</feature>
<feature type="modified residue" description="N6,N6,N6-trimethyllysine" evidence="1">
    <location>
        <position position="14"/>
    </location>
</feature>
<feature type="modified residue" description="N6-carboxylysine" evidence="1">
    <location>
        <position position="201"/>
    </location>
</feature>
<feature type="disulfide bond" description="Interchain; in linked form" evidence="1">
    <location>
        <position position="247"/>
    </location>
</feature>
<feature type="sequence conflict" description="In Ref. 1; CAA56999." evidence="2" ref="1">
    <original>A</original>
    <variation>R</variation>
    <location>
        <position position="53"/>
    </location>
</feature>
<feature type="sequence conflict" description="In Ref. 1; CAA56999." evidence="2" ref="1">
    <original>PVRSG</original>
    <variation>AVASR</variation>
    <location>
        <begin position="376"/>
        <end position="380"/>
    </location>
</feature>
<feature type="sequence conflict" description="In Ref. 1; CAA56999." evidence="2" ref="1">
    <original>D</original>
    <variation>E</variation>
    <location>
        <position position="392"/>
    </location>
</feature>
<comment type="function">
    <text evidence="1">RuBisCO catalyzes two reactions: the carboxylation of D-ribulose 1,5-bisphosphate, the primary event in carbon dioxide fixation, as well as the oxidative fragmentation of the pentose substrate in the photorespiration process. Both reactions occur simultaneously and in competition at the same active site.</text>
</comment>
<comment type="catalytic activity">
    <reaction evidence="1">
        <text>2 (2R)-3-phosphoglycerate + 2 H(+) = D-ribulose 1,5-bisphosphate + CO2 + H2O</text>
        <dbReference type="Rhea" id="RHEA:23124"/>
        <dbReference type="ChEBI" id="CHEBI:15377"/>
        <dbReference type="ChEBI" id="CHEBI:15378"/>
        <dbReference type="ChEBI" id="CHEBI:16526"/>
        <dbReference type="ChEBI" id="CHEBI:57870"/>
        <dbReference type="ChEBI" id="CHEBI:58272"/>
        <dbReference type="EC" id="4.1.1.39"/>
    </reaction>
</comment>
<comment type="catalytic activity">
    <reaction evidence="1">
        <text>D-ribulose 1,5-bisphosphate + O2 = 2-phosphoglycolate + (2R)-3-phosphoglycerate + 2 H(+)</text>
        <dbReference type="Rhea" id="RHEA:36631"/>
        <dbReference type="ChEBI" id="CHEBI:15378"/>
        <dbReference type="ChEBI" id="CHEBI:15379"/>
        <dbReference type="ChEBI" id="CHEBI:57870"/>
        <dbReference type="ChEBI" id="CHEBI:58033"/>
        <dbReference type="ChEBI" id="CHEBI:58272"/>
    </reaction>
</comment>
<comment type="cofactor">
    <cofactor evidence="1">
        <name>Mg(2+)</name>
        <dbReference type="ChEBI" id="CHEBI:18420"/>
    </cofactor>
    <text evidence="1">Binds 1 Mg(2+) ion per subunit.</text>
</comment>
<comment type="subunit">
    <text evidence="1">Heterohexadecamer of 8 large chains and 8 small chains; disulfide-linked. The disulfide link is formed within the large subunit homodimers.</text>
</comment>
<comment type="subcellular location">
    <subcellularLocation>
        <location>Plastid</location>
        <location>Chloroplast</location>
    </subcellularLocation>
</comment>
<comment type="PTM">
    <text evidence="1">The disulfide bond which can form in the large chain dimeric partners within the hexadecamer appears to be associated with oxidative stress and protein turnover.</text>
</comment>
<comment type="miscellaneous">
    <text evidence="1">The basic functional RuBisCO is composed of a large chain homodimer in a 'head-to-tail' conformation. In form I RuBisCO this homodimer is arranged in a barrel-like tetramer with the small subunits forming a tetrameric 'cap' on each end of the 'barrel'.</text>
</comment>
<comment type="similarity">
    <text evidence="1">Belongs to the RuBisCO large chain family. Type I subfamily.</text>
</comment>